<name>HPRL1_NATMM</name>
<proteinExistence type="inferred from homology"/>
<protein>
    <recommendedName>
        <fullName evidence="1">HGPRTase-like protein 1</fullName>
        <ecNumber evidence="1">2.4.2.-</ecNumber>
    </recommendedName>
</protein>
<evidence type="ECO:0000255" key="1">
    <source>
        <dbReference type="HAMAP-Rule" id="MF_01467"/>
    </source>
</evidence>
<gene>
    <name type="ordered locus">Nmag_2484</name>
</gene>
<dbReference type="EC" id="2.4.2.-" evidence="1"/>
<dbReference type="EMBL" id="CP001932">
    <property type="protein sequence ID" value="ADD06044.1"/>
    <property type="molecule type" value="Genomic_DNA"/>
</dbReference>
<dbReference type="RefSeq" id="WP_004215353.1">
    <property type="nucleotide sequence ID" value="NC_013922.1"/>
</dbReference>
<dbReference type="SMR" id="D3SY73"/>
<dbReference type="STRING" id="547559.Nmag_2484"/>
<dbReference type="PaxDb" id="547559-Nmag_2484"/>
<dbReference type="GeneID" id="8825337"/>
<dbReference type="KEGG" id="nmg:Nmag_2484"/>
<dbReference type="eggNOG" id="arCOG00030">
    <property type="taxonomic scope" value="Archaea"/>
</dbReference>
<dbReference type="HOGENOM" id="CLU_126376_0_0_2"/>
<dbReference type="OrthoDB" id="8323at2157"/>
<dbReference type="Proteomes" id="UP000001879">
    <property type="component" value="Chromosome"/>
</dbReference>
<dbReference type="GO" id="GO:0016740">
    <property type="term" value="F:transferase activity"/>
    <property type="evidence" value="ECO:0007669"/>
    <property type="project" value="UniProtKB-KW"/>
</dbReference>
<dbReference type="GO" id="GO:0006166">
    <property type="term" value="P:purine ribonucleoside salvage"/>
    <property type="evidence" value="ECO:0007669"/>
    <property type="project" value="UniProtKB-KW"/>
</dbReference>
<dbReference type="CDD" id="cd06223">
    <property type="entry name" value="PRTases_typeI"/>
    <property type="match status" value="1"/>
</dbReference>
<dbReference type="Gene3D" id="3.40.50.2020">
    <property type="match status" value="1"/>
</dbReference>
<dbReference type="HAMAP" id="MF_01467">
    <property type="entry name" value="Hypx_phosphoribosyltr"/>
    <property type="match status" value="1"/>
</dbReference>
<dbReference type="InterPro" id="IPR026597">
    <property type="entry name" value="HGPRTase-like"/>
</dbReference>
<dbReference type="InterPro" id="IPR000836">
    <property type="entry name" value="PRibTrfase_dom"/>
</dbReference>
<dbReference type="InterPro" id="IPR029057">
    <property type="entry name" value="PRTase-like"/>
</dbReference>
<dbReference type="InterPro" id="IPR050118">
    <property type="entry name" value="Pur/Pyrimidine_PRTase"/>
</dbReference>
<dbReference type="NCBIfam" id="NF040646">
    <property type="entry name" value="HPT_Archaea"/>
    <property type="match status" value="1"/>
</dbReference>
<dbReference type="NCBIfam" id="NF002635">
    <property type="entry name" value="PRK02304.1-4"/>
    <property type="match status" value="1"/>
</dbReference>
<dbReference type="PANTHER" id="PTHR43864">
    <property type="entry name" value="HYPOXANTHINE/GUANINE PHOSPHORIBOSYLTRANSFERASE"/>
    <property type="match status" value="1"/>
</dbReference>
<dbReference type="PANTHER" id="PTHR43864:SF1">
    <property type="entry name" value="XANTHINE PHOSPHORIBOSYLTRANSFERASE"/>
    <property type="match status" value="1"/>
</dbReference>
<dbReference type="Pfam" id="PF00156">
    <property type="entry name" value="Pribosyltran"/>
    <property type="match status" value="1"/>
</dbReference>
<dbReference type="SUPFAM" id="SSF53271">
    <property type="entry name" value="PRTase-like"/>
    <property type="match status" value="1"/>
</dbReference>
<dbReference type="PROSITE" id="PS00103">
    <property type="entry name" value="PUR_PYR_PR_TRANSFER"/>
    <property type="match status" value="1"/>
</dbReference>
<organism>
    <name type="scientific">Natrialba magadii (strain ATCC 43099 / DSM 3394 / CCM 3739 / CIP 104546 / IAM 13178 / JCM 8861 / NBRC 102185 / NCIMB 2190 / MS3)</name>
    <name type="common">Natronobacterium magadii</name>
    <dbReference type="NCBI Taxonomy" id="547559"/>
    <lineage>
        <taxon>Archaea</taxon>
        <taxon>Methanobacteriati</taxon>
        <taxon>Methanobacteriota</taxon>
        <taxon>Stenosarchaea group</taxon>
        <taxon>Halobacteria</taxon>
        <taxon>Halobacteriales</taxon>
        <taxon>Natrialbaceae</taxon>
        <taxon>Natrialba</taxon>
    </lineage>
</organism>
<keyword id="KW-0660">Purine salvage</keyword>
<keyword id="KW-1185">Reference proteome</keyword>
<keyword id="KW-0808">Transferase</keyword>
<reference key="1">
    <citation type="journal article" date="2012" name="BMC Genomics">
        <title>A comparative genomics perspective on the genetic content of the alkaliphilic haloarchaeon Natrialba magadii ATCC 43099T.</title>
        <authorList>
            <person name="Siddaramappa S."/>
            <person name="Challacombe J.F."/>
            <person name="Decastro R.E."/>
            <person name="Pfeiffer F."/>
            <person name="Sastre D.E."/>
            <person name="Gimenez M.I."/>
            <person name="Paggi R.A."/>
            <person name="Detter J.C."/>
            <person name="Davenport K.W."/>
            <person name="Goodwin L.A."/>
            <person name="Kyrpides N."/>
            <person name="Tapia R."/>
            <person name="Pitluck S."/>
            <person name="Lucas S."/>
            <person name="Woyke T."/>
            <person name="Maupin-Furlow J.A."/>
        </authorList>
    </citation>
    <scope>NUCLEOTIDE SEQUENCE [LARGE SCALE GENOMIC DNA]</scope>
    <source>
        <strain>ATCC 43099 / DSM 3394 / CCM 3739 / CIP 104546 / IAM 13178 / JCM 8861 / NBRC 102185 / NCIMB 2190 / MS3</strain>
    </source>
</reference>
<sequence>MDQLQQSLLDAPIIEKNGYHYFVHPISDGLPKLDPTLLREIVIRIIRKAELQDVDRIVTPAAMGIHISTAVSLMTDIPLTVIRKRKYGLEDEVAISQQTGYSENEMYINDVRAGERVLVLDDVLSTGGTLASVLEALDGIGAEVIDTVAVIKKVGGENKVDDAGYDVKTLINVDVVDGEVVIVDEHGDS</sequence>
<comment type="function">
    <text evidence="1">May catalyze a purine salvage reaction, the substrate is unknown.</text>
</comment>
<comment type="similarity">
    <text evidence="1">Belongs to the purine/pyrimidine phosphoribosyltransferase family. Archaeal HPRT subfamily.</text>
</comment>
<feature type="chain" id="PRO_0000415488" description="HGPRTase-like protein 1">
    <location>
        <begin position="1"/>
        <end position="189"/>
    </location>
</feature>
<accession>D3SY73</accession>